<name>SYR_BUCAP</name>
<protein>
    <recommendedName>
        <fullName>Arginine--tRNA ligase</fullName>
        <ecNumber>6.1.1.19</ecNumber>
    </recommendedName>
    <alternativeName>
        <fullName>Arginyl-tRNA synthetase</fullName>
        <shortName>ArgRS</shortName>
    </alternativeName>
</protein>
<proteinExistence type="inferred from homology"/>
<comment type="catalytic activity">
    <reaction>
        <text>tRNA(Arg) + L-arginine + ATP = L-arginyl-tRNA(Arg) + AMP + diphosphate</text>
        <dbReference type="Rhea" id="RHEA:20301"/>
        <dbReference type="Rhea" id="RHEA-COMP:9658"/>
        <dbReference type="Rhea" id="RHEA-COMP:9673"/>
        <dbReference type="ChEBI" id="CHEBI:30616"/>
        <dbReference type="ChEBI" id="CHEBI:32682"/>
        <dbReference type="ChEBI" id="CHEBI:33019"/>
        <dbReference type="ChEBI" id="CHEBI:78442"/>
        <dbReference type="ChEBI" id="CHEBI:78513"/>
        <dbReference type="ChEBI" id="CHEBI:456215"/>
        <dbReference type="EC" id="6.1.1.19"/>
    </reaction>
</comment>
<comment type="subunit">
    <text evidence="1">Monomer.</text>
</comment>
<comment type="subcellular location">
    <subcellularLocation>
        <location evidence="1">Cytoplasm</location>
    </subcellularLocation>
</comment>
<comment type="similarity">
    <text evidence="2">Belongs to the class-I aminoacyl-tRNA synthetase family.</text>
</comment>
<organism>
    <name type="scientific">Buchnera aphidicola subsp. Schizaphis graminum (strain Sg)</name>
    <dbReference type="NCBI Taxonomy" id="198804"/>
    <lineage>
        <taxon>Bacteria</taxon>
        <taxon>Pseudomonadati</taxon>
        <taxon>Pseudomonadota</taxon>
        <taxon>Gammaproteobacteria</taxon>
        <taxon>Enterobacterales</taxon>
        <taxon>Erwiniaceae</taxon>
        <taxon>Buchnera</taxon>
    </lineage>
</organism>
<evidence type="ECO:0000250" key="1"/>
<evidence type="ECO:0000305" key="2"/>
<reference key="1">
    <citation type="journal article" date="2002" name="Science">
        <title>50 million years of genomic stasis in endosymbiotic bacteria.</title>
        <authorList>
            <person name="Tamas I."/>
            <person name="Klasson L."/>
            <person name="Canbaeck B."/>
            <person name="Naeslund A.K."/>
            <person name="Eriksson A.-S."/>
            <person name="Wernegreen J.J."/>
            <person name="Sandstroem J.P."/>
            <person name="Moran N.A."/>
            <person name="Andersson S.G.E."/>
        </authorList>
    </citation>
    <scope>NUCLEOTIDE SEQUENCE [LARGE SCALE GENOMIC DNA]</scope>
    <source>
        <strain>Sg</strain>
    </source>
</reference>
<reference key="2">
    <citation type="journal article" date="1993" name="Gene">
        <title>Buchnera aphidicola (a prokaryotic endosymbiont of aphids) contains a putative 16S rRNA operon unlinked to the 23S rRNA-encoding gene: sequence determination, and promoter and terminator analysis.</title>
        <authorList>
            <person name="Munson M.A."/>
            <person name="Baumann L."/>
            <person name="Baumann P."/>
        </authorList>
    </citation>
    <scope>NUCLEOTIDE SEQUENCE [GENOMIC DNA] OF 1-131</scope>
</reference>
<accession>Q08888</accession>
<gene>
    <name type="primary">argS</name>
    <name type="ordered locus">BUsg_237</name>
</gene>
<dbReference type="EC" id="6.1.1.19"/>
<dbReference type="EMBL" id="AE013218">
    <property type="protein sequence ID" value="AAM67796.1"/>
    <property type="molecule type" value="Genomic_DNA"/>
</dbReference>
<dbReference type="EMBL" id="L18927">
    <property type="protein sequence ID" value="AAA17432.1"/>
    <property type="molecule type" value="Genomic_DNA"/>
</dbReference>
<dbReference type="PIR" id="I40591">
    <property type="entry name" value="I40591"/>
</dbReference>
<dbReference type="RefSeq" id="WP_011053763.1">
    <property type="nucleotide sequence ID" value="NC_004061.1"/>
</dbReference>
<dbReference type="SMR" id="Q08888"/>
<dbReference type="STRING" id="198804.BUsg_237"/>
<dbReference type="GeneID" id="93003703"/>
<dbReference type="KEGG" id="bas:BUsg_237"/>
<dbReference type="eggNOG" id="COG0018">
    <property type="taxonomic scope" value="Bacteria"/>
</dbReference>
<dbReference type="HOGENOM" id="CLU_006406_5_1_6"/>
<dbReference type="Proteomes" id="UP000000416">
    <property type="component" value="Chromosome"/>
</dbReference>
<dbReference type="GO" id="GO:0005737">
    <property type="term" value="C:cytoplasm"/>
    <property type="evidence" value="ECO:0007669"/>
    <property type="project" value="UniProtKB-SubCell"/>
</dbReference>
<dbReference type="GO" id="GO:0004814">
    <property type="term" value="F:arginine-tRNA ligase activity"/>
    <property type="evidence" value="ECO:0007669"/>
    <property type="project" value="UniProtKB-UniRule"/>
</dbReference>
<dbReference type="GO" id="GO:0005524">
    <property type="term" value="F:ATP binding"/>
    <property type="evidence" value="ECO:0007669"/>
    <property type="project" value="UniProtKB-UniRule"/>
</dbReference>
<dbReference type="GO" id="GO:0006420">
    <property type="term" value="P:arginyl-tRNA aminoacylation"/>
    <property type="evidence" value="ECO:0007669"/>
    <property type="project" value="UniProtKB-UniRule"/>
</dbReference>
<dbReference type="CDD" id="cd07956">
    <property type="entry name" value="Anticodon_Ia_Arg"/>
    <property type="match status" value="1"/>
</dbReference>
<dbReference type="CDD" id="cd00671">
    <property type="entry name" value="ArgRS_core"/>
    <property type="match status" value="1"/>
</dbReference>
<dbReference type="FunFam" id="3.40.50.620:FF:000030">
    <property type="entry name" value="Arginine--tRNA ligase"/>
    <property type="match status" value="1"/>
</dbReference>
<dbReference type="FunFam" id="1.10.730.10:FF:000006">
    <property type="entry name" value="Arginyl-tRNA synthetase 2, mitochondrial"/>
    <property type="match status" value="1"/>
</dbReference>
<dbReference type="Gene3D" id="3.30.1360.70">
    <property type="entry name" value="Arginyl tRNA synthetase N-terminal domain"/>
    <property type="match status" value="1"/>
</dbReference>
<dbReference type="Gene3D" id="3.40.50.620">
    <property type="entry name" value="HUPs"/>
    <property type="match status" value="1"/>
</dbReference>
<dbReference type="Gene3D" id="1.10.730.10">
    <property type="entry name" value="Isoleucyl-tRNA Synthetase, Domain 1"/>
    <property type="match status" value="1"/>
</dbReference>
<dbReference type="HAMAP" id="MF_00123">
    <property type="entry name" value="Arg_tRNA_synth"/>
    <property type="match status" value="1"/>
</dbReference>
<dbReference type="InterPro" id="IPR001412">
    <property type="entry name" value="aa-tRNA-synth_I_CS"/>
</dbReference>
<dbReference type="InterPro" id="IPR001278">
    <property type="entry name" value="Arg-tRNA-ligase"/>
</dbReference>
<dbReference type="InterPro" id="IPR005148">
    <property type="entry name" value="Arg-tRNA-synth_N"/>
</dbReference>
<dbReference type="InterPro" id="IPR036695">
    <property type="entry name" value="Arg-tRNA-synth_N_sf"/>
</dbReference>
<dbReference type="InterPro" id="IPR035684">
    <property type="entry name" value="ArgRS_core"/>
</dbReference>
<dbReference type="InterPro" id="IPR008909">
    <property type="entry name" value="DALR_anticod-bd"/>
</dbReference>
<dbReference type="InterPro" id="IPR014729">
    <property type="entry name" value="Rossmann-like_a/b/a_fold"/>
</dbReference>
<dbReference type="InterPro" id="IPR009080">
    <property type="entry name" value="tRNAsynth_Ia_anticodon-bd"/>
</dbReference>
<dbReference type="NCBIfam" id="TIGR00456">
    <property type="entry name" value="argS"/>
    <property type="match status" value="1"/>
</dbReference>
<dbReference type="PANTHER" id="PTHR11956:SF5">
    <property type="entry name" value="ARGININE--TRNA LIGASE, CYTOPLASMIC"/>
    <property type="match status" value="1"/>
</dbReference>
<dbReference type="PANTHER" id="PTHR11956">
    <property type="entry name" value="ARGINYL-TRNA SYNTHETASE"/>
    <property type="match status" value="1"/>
</dbReference>
<dbReference type="Pfam" id="PF03485">
    <property type="entry name" value="Arg_tRNA_synt_N"/>
    <property type="match status" value="1"/>
</dbReference>
<dbReference type="Pfam" id="PF05746">
    <property type="entry name" value="DALR_1"/>
    <property type="match status" value="1"/>
</dbReference>
<dbReference type="Pfam" id="PF00750">
    <property type="entry name" value="tRNA-synt_1d"/>
    <property type="match status" value="1"/>
</dbReference>
<dbReference type="PRINTS" id="PR01038">
    <property type="entry name" value="TRNASYNTHARG"/>
</dbReference>
<dbReference type="SMART" id="SM01016">
    <property type="entry name" value="Arg_tRNA_synt_N"/>
    <property type="match status" value="1"/>
</dbReference>
<dbReference type="SMART" id="SM00836">
    <property type="entry name" value="DALR_1"/>
    <property type="match status" value="1"/>
</dbReference>
<dbReference type="SUPFAM" id="SSF47323">
    <property type="entry name" value="Anticodon-binding domain of a subclass of class I aminoacyl-tRNA synthetases"/>
    <property type="match status" value="1"/>
</dbReference>
<dbReference type="SUPFAM" id="SSF55190">
    <property type="entry name" value="Arginyl-tRNA synthetase (ArgRS), N-terminal 'additional' domain"/>
    <property type="match status" value="1"/>
</dbReference>
<dbReference type="SUPFAM" id="SSF52374">
    <property type="entry name" value="Nucleotidylyl transferase"/>
    <property type="match status" value="1"/>
</dbReference>
<dbReference type="PROSITE" id="PS00178">
    <property type="entry name" value="AA_TRNA_LIGASE_I"/>
    <property type="match status" value="1"/>
</dbReference>
<keyword id="KW-0030">Aminoacyl-tRNA synthetase</keyword>
<keyword id="KW-0067">ATP-binding</keyword>
<keyword id="KW-0963">Cytoplasm</keyword>
<keyword id="KW-0436">Ligase</keyword>
<keyword id="KW-0547">Nucleotide-binding</keyword>
<keyword id="KW-0648">Protein biosynthesis</keyword>
<sequence length="580" mass="68043">MNIKYLIKKDIEQALIKINSNYTYEVFIISSKKIELGHYQVDNLMKISSRLKIKPYKLFQKILILIEKKKIYKKIIFSHPGFINIFIKNEWLSEKLEIPFISSRLGVKYIYPKKNIVIDYSSPNIAKEMHVGHLRSTIIGDVTVRILEFLGQKVIRANHIGDWGTQFGILIAYLEDKKLLKKLKKNLLSLQDLDNIYCQSKKQYNSNELFSKKSREFVVKLQNGDQYCCAIWKKLVSITMLENYKIYKKLNVTLEEKHTMGESFYNPMLPKIVEDLKKQKIAIEKNGAVIVFLDEFKNRMGDSMGVIIRKKDKGFLYSTTDIACLKYRYQNLHADRIIYYTDSRQYQHLLQSWTIAEKANYISKNLLLEHHMFGMMLSKNRRPFKTRDGNTIKLSNLLNESINRATNLIQKKQPNLCKKKLIKLGEIIGISAVKYSDLSKNRNTNYIFDWDKMLSFEGNTAPYIQYAYTRIISILKKSNIPLHKIKMKIILNEESEINLAIKILEFEEIILLIAKNGTPHIMCKYLYQLSTYFSHFYENCSILFSEKIKIRKSRIKLSFLTAKTIKKGLNLLGIKTIKKM</sequence>
<feature type="chain" id="PRO_0000151540" description="Arginine--tRNA ligase">
    <location>
        <begin position="1"/>
        <end position="580"/>
    </location>
</feature>
<feature type="short sequence motif" description="'HIGH' region">
    <location>
        <begin position="123"/>
        <end position="133"/>
    </location>
</feature>